<accession>A8AB69</accession>
<gene>
    <name type="ordered locus">Igni_0992</name>
</gene>
<name>Y992_IGNH4</name>
<sequence>MLVRPPAVAGTFYPADAEELIRLIEWSFTHPLGPGEVPEVSPVRRKASVGYMVPHAGYIYSGPVAAWSYYHLAQEGAPETVVIIGPNHTGLGPAVSVMPPSIWETPLGGVKTDDEAISELLKVSNVVEEDYSAHAYEHSLEVQLPFLQYLFGDSFRIVPIVMKVQTPSVARLLMQSIKEAMENLGRDYVVLSSSDLNHYEPHDITVEKDMLALEKIVNLDPEGLQEVLVKYDISMCGPGPVMVNMYLDKEYGAERAILLKHATSGDTSGDKSAVVGYAAVKFPLP</sequence>
<keyword id="KW-1185">Reference proteome</keyword>
<comment type="similarity">
    <text evidence="1">Belongs to the MEMO1 family.</text>
</comment>
<dbReference type="EMBL" id="CP000816">
    <property type="protein sequence ID" value="ABU82171.1"/>
    <property type="molecule type" value="Genomic_DNA"/>
</dbReference>
<dbReference type="RefSeq" id="WP_012123135.1">
    <property type="nucleotide sequence ID" value="NC_009776.1"/>
</dbReference>
<dbReference type="SMR" id="A8AB69"/>
<dbReference type="STRING" id="453591.Igni_0992"/>
<dbReference type="GeneID" id="5563068"/>
<dbReference type="KEGG" id="iho:Igni_0992"/>
<dbReference type="eggNOG" id="arCOG01728">
    <property type="taxonomic scope" value="Archaea"/>
</dbReference>
<dbReference type="HOGENOM" id="CLU_038085_2_0_2"/>
<dbReference type="OrthoDB" id="372162at2157"/>
<dbReference type="PhylomeDB" id="A8AB69"/>
<dbReference type="Proteomes" id="UP000000262">
    <property type="component" value="Chromosome"/>
</dbReference>
<dbReference type="CDD" id="cd07361">
    <property type="entry name" value="MEMO_like"/>
    <property type="match status" value="1"/>
</dbReference>
<dbReference type="Gene3D" id="3.40.830.10">
    <property type="entry name" value="LigB-like"/>
    <property type="match status" value="1"/>
</dbReference>
<dbReference type="HAMAP" id="MF_00055">
    <property type="entry name" value="MEMO1"/>
    <property type="match status" value="1"/>
</dbReference>
<dbReference type="InterPro" id="IPR002737">
    <property type="entry name" value="MEMO1_fam"/>
</dbReference>
<dbReference type="NCBIfam" id="TIGR04336">
    <property type="entry name" value="AmmeMemoSam_B"/>
    <property type="match status" value="1"/>
</dbReference>
<dbReference type="PANTHER" id="PTHR11060">
    <property type="entry name" value="PROTEIN MEMO1"/>
    <property type="match status" value="1"/>
</dbReference>
<dbReference type="PANTHER" id="PTHR11060:SF0">
    <property type="entry name" value="PROTEIN MEMO1"/>
    <property type="match status" value="1"/>
</dbReference>
<dbReference type="Pfam" id="PF01875">
    <property type="entry name" value="Memo"/>
    <property type="match status" value="1"/>
</dbReference>
<organism>
    <name type="scientific">Ignicoccus hospitalis (strain KIN4/I / DSM 18386 / JCM 14125)</name>
    <dbReference type="NCBI Taxonomy" id="453591"/>
    <lineage>
        <taxon>Archaea</taxon>
        <taxon>Thermoproteota</taxon>
        <taxon>Thermoprotei</taxon>
        <taxon>Desulfurococcales</taxon>
        <taxon>Desulfurococcaceae</taxon>
        <taxon>Ignicoccus</taxon>
    </lineage>
</organism>
<protein>
    <recommendedName>
        <fullName evidence="1">MEMO1 family protein Igni_0992</fullName>
    </recommendedName>
</protein>
<reference key="1">
    <citation type="journal article" date="2008" name="Genome Biol.">
        <title>A genomic analysis of the archaeal system Ignicoccus hospitalis-Nanoarchaeum equitans.</title>
        <authorList>
            <person name="Podar M."/>
            <person name="Anderson I."/>
            <person name="Makarova K.S."/>
            <person name="Elkins J.G."/>
            <person name="Ivanova N."/>
            <person name="Wall M.A."/>
            <person name="Lykidis A."/>
            <person name="Mavromatis K."/>
            <person name="Sun H."/>
            <person name="Hudson M.E."/>
            <person name="Chen W."/>
            <person name="Deciu C."/>
            <person name="Hutchison D."/>
            <person name="Eads J.R."/>
            <person name="Anderson A."/>
            <person name="Fernandes F."/>
            <person name="Szeto E."/>
            <person name="Lapidus A."/>
            <person name="Kyrpides N.C."/>
            <person name="Saier M.H. Jr."/>
            <person name="Richardson P.M."/>
            <person name="Rachel R."/>
            <person name="Huber H."/>
            <person name="Eisen J.A."/>
            <person name="Koonin E.V."/>
            <person name="Keller M."/>
            <person name="Stetter K.O."/>
        </authorList>
    </citation>
    <scope>NUCLEOTIDE SEQUENCE [LARGE SCALE GENOMIC DNA]</scope>
    <source>
        <strain>KIN4/I / DSM 18386 / JCM 14125</strain>
    </source>
</reference>
<feature type="chain" id="PRO_1000003317" description="MEMO1 family protein Igni_0992">
    <location>
        <begin position="1"/>
        <end position="285"/>
    </location>
</feature>
<proteinExistence type="inferred from homology"/>
<evidence type="ECO:0000255" key="1">
    <source>
        <dbReference type="HAMAP-Rule" id="MF_00055"/>
    </source>
</evidence>